<dbReference type="EC" id="3.1.1.4" evidence="5"/>
<dbReference type="EMBL" id="AF166098">
    <property type="protein sequence ID" value="AAF04499.1"/>
    <property type="molecule type" value="mRNA"/>
</dbReference>
<dbReference type="EMBL" id="AF112984">
    <property type="protein sequence ID" value="AAF22290.1"/>
    <property type="molecule type" value="mRNA"/>
</dbReference>
<dbReference type="EMBL" id="BC027524">
    <property type="protein sequence ID" value="AAH27524.1"/>
    <property type="molecule type" value="mRNA"/>
</dbReference>
<dbReference type="CCDS" id="CCDS18835.1"/>
<dbReference type="RefSeq" id="NP_036174.1">
    <property type="nucleotide sequence ID" value="NM_012044.2"/>
</dbReference>
<dbReference type="SMR" id="Q9QUL3"/>
<dbReference type="BioGRID" id="205090">
    <property type="interactions" value="2"/>
</dbReference>
<dbReference type="FunCoup" id="Q9QUL3">
    <property type="interactions" value="520"/>
</dbReference>
<dbReference type="STRING" id="10090.ENSMUSP00000030531"/>
<dbReference type="BindingDB" id="Q9QUL3"/>
<dbReference type="ChEMBL" id="CHEMBL4201"/>
<dbReference type="GlyGen" id="Q9QUL3">
    <property type="glycosylation" value="1 site"/>
</dbReference>
<dbReference type="PhosphoSitePlus" id="Q9QUL3"/>
<dbReference type="PaxDb" id="10090-ENSMUSP00000030531"/>
<dbReference type="Antibodypedia" id="29744">
    <property type="antibodies" value="37 antibodies from 12 providers"/>
</dbReference>
<dbReference type="DNASU" id="26970"/>
<dbReference type="Ensembl" id="ENSMUST00000030531.14">
    <property type="protein sequence ID" value="ENSMUSP00000030531.8"/>
    <property type="gene ID" value="ENSMUSG00000028751.14"/>
</dbReference>
<dbReference type="Ensembl" id="ENSMUST00000105804.2">
    <property type="protein sequence ID" value="ENSMUSP00000101430.2"/>
    <property type="gene ID" value="ENSMUSG00000028751.14"/>
</dbReference>
<dbReference type="GeneID" id="26970"/>
<dbReference type="KEGG" id="mmu:26970"/>
<dbReference type="UCSC" id="uc008vll.1">
    <property type="organism name" value="mouse"/>
</dbReference>
<dbReference type="AGR" id="MGI:1349660"/>
<dbReference type="CTD" id="30814"/>
<dbReference type="MGI" id="MGI:1349660">
    <property type="gene designation" value="Pla2g2e"/>
</dbReference>
<dbReference type="VEuPathDB" id="HostDB:ENSMUSG00000028751"/>
<dbReference type="eggNOG" id="KOG4087">
    <property type="taxonomic scope" value="Eukaryota"/>
</dbReference>
<dbReference type="GeneTree" id="ENSGT00940000161504"/>
<dbReference type="HOGENOM" id="CLU_090683_3_0_1"/>
<dbReference type="InParanoid" id="Q9QUL3"/>
<dbReference type="OMA" id="IGGSHWP"/>
<dbReference type="OrthoDB" id="5841574at2759"/>
<dbReference type="PhylomeDB" id="Q9QUL3"/>
<dbReference type="TreeFam" id="TF319283"/>
<dbReference type="BRENDA" id="3.1.1.4">
    <property type="organism ID" value="3474"/>
</dbReference>
<dbReference type="Reactome" id="R-MMU-1482788">
    <property type="pathway name" value="Acyl chain remodelling of PC"/>
</dbReference>
<dbReference type="Reactome" id="R-MMU-1482801">
    <property type="pathway name" value="Acyl chain remodelling of PS"/>
</dbReference>
<dbReference type="Reactome" id="R-MMU-1482839">
    <property type="pathway name" value="Acyl chain remodelling of PE"/>
</dbReference>
<dbReference type="Reactome" id="R-MMU-1482922">
    <property type="pathway name" value="Acyl chain remodelling of PI"/>
</dbReference>
<dbReference type="Reactome" id="R-MMU-1482925">
    <property type="pathway name" value="Acyl chain remodelling of PG"/>
</dbReference>
<dbReference type="Reactome" id="R-MMU-1483166">
    <property type="pathway name" value="Synthesis of PA"/>
</dbReference>
<dbReference type="BioGRID-ORCS" id="26970">
    <property type="hits" value="2 hits in 79 CRISPR screens"/>
</dbReference>
<dbReference type="PRO" id="PR:Q9QUL3"/>
<dbReference type="Proteomes" id="UP000000589">
    <property type="component" value="Chromosome 4"/>
</dbReference>
<dbReference type="RNAct" id="Q9QUL3">
    <property type="molecule type" value="protein"/>
</dbReference>
<dbReference type="Bgee" id="ENSMUSG00000028751">
    <property type="expression patterns" value="Expressed in lip and 36 other cell types or tissues"/>
</dbReference>
<dbReference type="ExpressionAtlas" id="Q9QUL3">
    <property type="expression patterns" value="baseline and differential"/>
</dbReference>
<dbReference type="GO" id="GO:0005737">
    <property type="term" value="C:cytoplasm"/>
    <property type="evidence" value="ECO:0007669"/>
    <property type="project" value="UniProtKB-SubCell"/>
</dbReference>
<dbReference type="GO" id="GO:0005576">
    <property type="term" value="C:extracellular region"/>
    <property type="evidence" value="ECO:0000314"/>
    <property type="project" value="UniProtKB"/>
</dbReference>
<dbReference type="GO" id="GO:0005509">
    <property type="term" value="F:calcium ion binding"/>
    <property type="evidence" value="ECO:0000250"/>
    <property type="project" value="UniProtKB"/>
</dbReference>
<dbReference type="GO" id="GO:0047498">
    <property type="term" value="F:calcium-dependent phospholipase A2 activity"/>
    <property type="evidence" value="ECO:0000314"/>
    <property type="project" value="UniProtKB"/>
</dbReference>
<dbReference type="GO" id="GO:0050482">
    <property type="term" value="P:arachidonate secretion"/>
    <property type="evidence" value="ECO:0007669"/>
    <property type="project" value="InterPro"/>
</dbReference>
<dbReference type="GO" id="GO:0006954">
    <property type="term" value="P:inflammatory response"/>
    <property type="evidence" value="ECO:0007669"/>
    <property type="project" value="UniProtKB-KW"/>
</dbReference>
<dbReference type="GO" id="GO:0016042">
    <property type="term" value="P:lipid catabolic process"/>
    <property type="evidence" value="ECO:0007669"/>
    <property type="project" value="InterPro"/>
</dbReference>
<dbReference type="GO" id="GO:0034374">
    <property type="term" value="P:low-density lipoprotein particle remodeling"/>
    <property type="evidence" value="ECO:0000315"/>
    <property type="project" value="MGI"/>
</dbReference>
<dbReference type="GO" id="GO:0046470">
    <property type="term" value="P:phosphatidylcholine metabolic process"/>
    <property type="evidence" value="ECO:0000314"/>
    <property type="project" value="UniProtKB"/>
</dbReference>
<dbReference type="GO" id="GO:0046471">
    <property type="term" value="P:phosphatidylglycerol metabolic process"/>
    <property type="evidence" value="ECO:0000314"/>
    <property type="project" value="UniProtKB"/>
</dbReference>
<dbReference type="CDD" id="cd00125">
    <property type="entry name" value="PLA2c"/>
    <property type="match status" value="1"/>
</dbReference>
<dbReference type="FunFam" id="1.20.90.10:FF:000001">
    <property type="entry name" value="Basic phospholipase A2 homolog"/>
    <property type="match status" value="1"/>
</dbReference>
<dbReference type="Gene3D" id="1.20.90.10">
    <property type="entry name" value="Phospholipase A2 domain"/>
    <property type="match status" value="1"/>
</dbReference>
<dbReference type="InterPro" id="IPR001211">
    <property type="entry name" value="PLipase_A2"/>
</dbReference>
<dbReference type="InterPro" id="IPR016090">
    <property type="entry name" value="PLipase_A2_dom"/>
</dbReference>
<dbReference type="InterPro" id="IPR036444">
    <property type="entry name" value="PLipase_A2_dom_sf"/>
</dbReference>
<dbReference type="InterPro" id="IPR033113">
    <property type="entry name" value="PLipase_A2_His_AS"/>
</dbReference>
<dbReference type="PANTHER" id="PTHR11716:SF56">
    <property type="entry name" value="GROUP IIE SECRETORY PHOSPHOLIPASE A2"/>
    <property type="match status" value="1"/>
</dbReference>
<dbReference type="PANTHER" id="PTHR11716">
    <property type="entry name" value="PHOSPHOLIPASE A2 FAMILY MEMBER"/>
    <property type="match status" value="1"/>
</dbReference>
<dbReference type="Pfam" id="PF00068">
    <property type="entry name" value="Phospholip_A2_1"/>
    <property type="match status" value="1"/>
</dbReference>
<dbReference type="PRINTS" id="PR00389">
    <property type="entry name" value="PHPHLIPASEA2"/>
</dbReference>
<dbReference type="SMART" id="SM00085">
    <property type="entry name" value="PA2c"/>
    <property type="match status" value="1"/>
</dbReference>
<dbReference type="SUPFAM" id="SSF48619">
    <property type="entry name" value="Phospholipase A2, PLA2"/>
    <property type="match status" value="1"/>
</dbReference>
<dbReference type="PROSITE" id="PS00118">
    <property type="entry name" value="PA2_HIS"/>
    <property type="match status" value="1"/>
</dbReference>
<accession>Q9QUL3</accession>
<keyword id="KW-0106">Calcium</keyword>
<keyword id="KW-0963">Cytoplasm</keyword>
<keyword id="KW-1015">Disulfide bond</keyword>
<keyword id="KW-0378">Hydrolase</keyword>
<keyword id="KW-0395">Inflammatory response</keyword>
<keyword id="KW-0443">Lipid metabolism</keyword>
<keyword id="KW-0479">Metal-binding</keyword>
<keyword id="KW-1208">Phospholipid metabolism</keyword>
<keyword id="KW-1185">Reference proteome</keyword>
<keyword id="KW-0964">Secreted</keyword>
<keyword id="KW-0732">Signal</keyword>
<organism>
    <name type="scientific">Mus musculus</name>
    <name type="common">Mouse</name>
    <dbReference type="NCBI Taxonomy" id="10090"/>
    <lineage>
        <taxon>Eukaryota</taxon>
        <taxon>Metazoa</taxon>
        <taxon>Chordata</taxon>
        <taxon>Craniata</taxon>
        <taxon>Vertebrata</taxon>
        <taxon>Euteleostomi</taxon>
        <taxon>Mammalia</taxon>
        <taxon>Eutheria</taxon>
        <taxon>Euarchontoglires</taxon>
        <taxon>Glires</taxon>
        <taxon>Rodentia</taxon>
        <taxon>Myomorpha</taxon>
        <taxon>Muroidea</taxon>
        <taxon>Muridae</taxon>
        <taxon>Murinae</taxon>
        <taxon>Mus</taxon>
        <taxon>Mus</taxon>
    </lineage>
</organism>
<feature type="signal peptide" evidence="3">
    <location>
        <begin position="1"/>
        <end position="19"/>
    </location>
</feature>
<feature type="chain" id="PRO_0000022758" description="Group IIE secretory phospholipase A2">
    <location>
        <begin position="20"/>
        <end position="142"/>
    </location>
</feature>
<feature type="active site" evidence="4">
    <location>
        <position position="65"/>
    </location>
</feature>
<feature type="active site" evidence="4">
    <location>
        <position position="109"/>
    </location>
</feature>
<feature type="binding site" evidence="2">
    <location>
        <position position="41"/>
    </location>
    <ligand>
        <name>Ca(2+)</name>
        <dbReference type="ChEBI" id="CHEBI:29108"/>
        <label>2</label>
    </ligand>
</feature>
<feature type="binding site" evidence="2">
    <location>
        <position position="43"/>
    </location>
    <ligand>
        <name>Ca(2+)</name>
        <dbReference type="ChEBI" id="CHEBI:29108"/>
        <label>2</label>
    </ligand>
</feature>
<feature type="binding site" evidence="2">
    <location>
        <position position="45"/>
    </location>
    <ligand>
        <name>Ca(2+)</name>
        <dbReference type="ChEBI" id="CHEBI:29108"/>
        <label>1</label>
    </ligand>
</feature>
<feature type="binding site" evidence="1">
    <location>
        <position position="45"/>
    </location>
    <ligand>
        <name>Ca(2+)</name>
        <dbReference type="ChEBI" id="CHEBI:29108"/>
    </ligand>
</feature>
<feature type="binding site" evidence="2">
    <location>
        <position position="47"/>
    </location>
    <ligand>
        <name>Ca(2+)</name>
        <dbReference type="ChEBI" id="CHEBI:29108"/>
        <label>1</label>
    </ligand>
</feature>
<feature type="binding site" evidence="1">
    <location>
        <position position="47"/>
    </location>
    <ligand>
        <name>Ca(2+)</name>
        <dbReference type="ChEBI" id="CHEBI:29108"/>
    </ligand>
</feature>
<feature type="binding site" evidence="2">
    <location>
        <position position="49"/>
    </location>
    <ligand>
        <name>Ca(2+)</name>
        <dbReference type="ChEBI" id="CHEBI:29108"/>
        <label>1</label>
    </ligand>
</feature>
<feature type="binding site" evidence="1">
    <location>
        <position position="49"/>
    </location>
    <ligand>
        <name>Ca(2+)</name>
        <dbReference type="ChEBI" id="CHEBI:29108"/>
    </ligand>
</feature>
<feature type="binding site" evidence="2">
    <location>
        <position position="66"/>
    </location>
    <ligand>
        <name>Ca(2+)</name>
        <dbReference type="ChEBI" id="CHEBI:29108"/>
        <label>1</label>
    </ligand>
</feature>
<feature type="binding site" evidence="1">
    <location>
        <position position="66"/>
    </location>
    <ligand>
        <name>Ca(2+)</name>
        <dbReference type="ChEBI" id="CHEBI:29108"/>
    </ligand>
</feature>
<feature type="binding site" evidence="2">
    <location>
        <position position="130"/>
    </location>
    <ligand>
        <name>Ca(2+)</name>
        <dbReference type="ChEBI" id="CHEBI:29108"/>
        <label>2</label>
    </ligand>
</feature>
<feature type="binding site" evidence="2">
    <location>
        <position position="132"/>
    </location>
    <ligand>
        <name>Ca(2+)</name>
        <dbReference type="ChEBI" id="CHEBI:29108"/>
        <label>2</label>
    </ligand>
</feature>
<feature type="disulfide bond" evidence="2">
    <location>
        <begin position="44"/>
        <end position="135"/>
    </location>
</feature>
<feature type="disulfide bond" evidence="2">
    <location>
        <begin position="46"/>
        <end position="62"/>
    </location>
</feature>
<feature type="disulfide bond" evidence="2">
    <location>
        <begin position="61"/>
        <end position="115"/>
    </location>
</feature>
<feature type="disulfide bond" evidence="2">
    <location>
        <begin position="67"/>
        <end position="142"/>
    </location>
</feature>
<feature type="disulfide bond" evidence="2">
    <location>
        <begin position="68"/>
        <end position="108"/>
    </location>
</feature>
<feature type="disulfide bond" evidence="2">
    <location>
        <begin position="77"/>
        <end position="101"/>
    </location>
</feature>
<feature type="disulfide bond" evidence="2">
    <location>
        <begin position="95"/>
        <end position="106"/>
    </location>
</feature>
<protein>
    <recommendedName>
        <fullName>Group IIE secretory phospholipase A2</fullName>
        <shortName>GIIE sPLA2</shortName>
        <shortName>sPLA2-IIE</shortName>
        <ecNumber evidence="5">3.1.1.4</ecNumber>
    </recommendedName>
    <alternativeName>
        <fullName>Phosphatidylcholine 2-acylhydrolase 2E</fullName>
    </alternativeName>
</protein>
<sequence>MKPPIALACLCLLVPLAGGNLVQFGVMIERMTGKPALQYNDYGCYCGVGGSHWPVDETDWCCHAHDCCYGRLEKLGCDPKLEKYLFSITRDNIFCAGRTACQRHTCECDKRAALCFRHNLNTYNRKYAHYPNKLCTGPTPPC</sequence>
<name>PA2GE_MOUSE</name>
<evidence type="ECO:0000250" key="1"/>
<evidence type="ECO:0000250" key="2">
    <source>
        <dbReference type="UniProtKB" id="Q9NZK7"/>
    </source>
</evidence>
<evidence type="ECO:0000255" key="3"/>
<evidence type="ECO:0000255" key="4">
    <source>
        <dbReference type="PROSITE-ProRule" id="PRU10035"/>
    </source>
</evidence>
<evidence type="ECO:0000269" key="5">
    <source>
    </source>
</evidence>
<evidence type="ECO:0000269" key="6">
    <source>
    </source>
</evidence>
<evidence type="ECO:0000269" key="7">
    <source>
    </source>
</evidence>
<evidence type="ECO:0000269" key="8">
    <source>
    </source>
</evidence>
<evidence type="ECO:0000269" key="9">
    <source>
    </source>
</evidence>
<evidence type="ECO:0000305" key="10"/>
<evidence type="ECO:0000305" key="11">
    <source>
    </source>
</evidence>
<evidence type="ECO:0000305" key="12">
    <source>
    </source>
</evidence>
<gene>
    <name type="primary">Pla2g2e</name>
</gene>
<proteinExistence type="evidence at protein level"/>
<comment type="function">
    <text evidence="2 5 7 8 9">Secretory calcium-dependent phospholipase A2 that primarily targets extracellular phospholipids (PubMed:10531313, PubMed:11922621). Hydrolyzes the ester bond of the fatty acyl group attached at sn-2 position of phospholipids (phospholipase A2 activity), releasing various unsaturated fatty acids including oleoate, linoleoate, arachidonate, docosahexaenoate and lysophosphatidylethanolamines in preference to lysophosphatidylcholines (By similarity). In response to high-fat diet, hydrolyzes minor lipoprotein phospholipids including phosphatidylserines, phosphatidylinositols and phosphatidylglycerols, altering lipoprotein composition and fat storage in adipose tissue and liver (PubMed:24910243). May act in an autocrine and paracrine manner (By similarity). Contributes to lipid remodeling of cellular membranes and generation of lipid mediators involved in pathogen clearance. Cleaves sn-2 fatty acyl chains of phosphatidylglycerols and phosphatidylethanolamines, which are major components of membrane phospholipids in bacteria (By similarity). Acts as a hair follicle phospholipase A2. Selectively releases lysophosphatidylethanolamines (LPE) and various unsaturated fatty acids in skin to regulate hair follicle homeostasis (PubMed:27226633). May regulate the inflammatory response by releasing arachidonate, a precursor of prostaglandins and leukotrienes. Upon allergen exposure, may participate in allergic inflammatory response by enhancing leukotriene C4 synthesis and degranulation in mast cells (PubMed:11922621).</text>
</comment>
<comment type="catalytic activity">
    <reaction evidence="2">
        <text>a 1,2-diacyl-sn-glycero-3-phosphoethanolamine + H2O = a 1-acyl-sn-glycero-3-phosphoethanolamine + a fatty acid + H(+)</text>
        <dbReference type="Rhea" id="RHEA:44604"/>
        <dbReference type="ChEBI" id="CHEBI:15377"/>
        <dbReference type="ChEBI" id="CHEBI:15378"/>
        <dbReference type="ChEBI" id="CHEBI:28868"/>
        <dbReference type="ChEBI" id="CHEBI:64381"/>
        <dbReference type="ChEBI" id="CHEBI:64612"/>
    </reaction>
</comment>
<comment type="catalytic activity">
    <reaction evidence="2">
        <text>1-hexadecanoyl-2-(9Z-octadecenoyl)-sn-glycero-3-phosphoethanolamine + H2O = 1-hexadecanoyl-sn-glycero-3-phosphoethanolamine + (9Z)-octadecenoate + H(+)</text>
        <dbReference type="Rhea" id="RHEA:40911"/>
        <dbReference type="ChEBI" id="CHEBI:15377"/>
        <dbReference type="ChEBI" id="CHEBI:15378"/>
        <dbReference type="ChEBI" id="CHEBI:30823"/>
        <dbReference type="ChEBI" id="CHEBI:73004"/>
        <dbReference type="ChEBI" id="CHEBI:73007"/>
    </reaction>
    <physiologicalReaction direction="left-to-right" evidence="2">
        <dbReference type="Rhea" id="RHEA:40912"/>
    </physiologicalReaction>
</comment>
<comment type="catalytic activity">
    <reaction evidence="2">
        <text>1-hexadecanoyl-2-(9Z,12Z-octadecadienoyl)-sn-glycero-3-phosphoethanolamine + H2O = 1-hexadecanoyl-sn-glycero-3-phosphoethanolamine + (9Z,12Z)-octadecadienoate + H(+)</text>
        <dbReference type="Rhea" id="RHEA:40815"/>
        <dbReference type="ChEBI" id="CHEBI:15377"/>
        <dbReference type="ChEBI" id="CHEBI:15378"/>
        <dbReference type="ChEBI" id="CHEBI:30245"/>
        <dbReference type="ChEBI" id="CHEBI:73004"/>
        <dbReference type="ChEBI" id="CHEBI:73008"/>
    </reaction>
    <physiologicalReaction direction="left-to-right" evidence="2">
        <dbReference type="Rhea" id="RHEA:40816"/>
    </physiologicalReaction>
</comment>
<comment type="catalytic activity">
    <reaction evidence="7">
        <text>1-hexadecanoyl-2-(5Z,8Z,11Z,14Z-eicosatetraenoyl)-sn-glycero-3-phosphoethanolamine + H2O = 1-hexadecanoyl-sn-glycero-3-phosphoethanolamine + (5Z,8Z,11Z,14Z)-eicosatetraenoate + H(+)</text>
        <dbReference type="Rhea" id="RHEA:40431"/>
        <dbReference type="ChEBI" id="CHEBI:15377"/>
        <dbReference type="ChEBI" id="CHEBI:15378"/>
        <dbReference type="ChEBI" id="CHEBI:32395"/>
        <dbReference type="ChEBI" id="CHEBI:73004"/>
        <dbReference type="ChEBI" id="CHEBI:73009"/>
    </reaction>
    <physiologicalReaction direction="left-to-right" evidence="12">
        <dbReference type="Rhea" id="RHEA:40432"/>
    </physiologicalReaction>
</comment>
<comment type="catalytic activity">
    <reaction evidence="5">
        <text>1,2-dihexadecanoyl-sn-glycero-3-phospho-(1'-sn-glycerol) + H2O = 1-hexadecanoyl-sn-glycero-3-phospho-(1'-sn-glycerol) + hexadecanoate + H(+)</text>
        <dbReference type="Rhea" id="RHEA:45472"/>
        <dbReference type="ChEBI" id="CHEBI:7896"/>
        <dbReference type="ChEBI" id="CHEBI:15377"/>
        <dbReference type="ChEBI" id="CHEBI:15378"/>
        <dbReference type="ChEBI" id="CHEBI:72829"/>
        <dbReference type="ChEBI" id="CHEBI:75158"/>
    </reaction>
    <physiologicalReaction direction="left-to-right" evidence="11">
        <dbReference type="Rhea" id="RHEA:45473"/>
    </physiologicalReaction>
</comment>
<comment type="catalytic activity">
    <reaction evidence="2">
        <text>1-hexadecanoyl-2-(9Z-octadecenoyl)-sn-glycero-3-phosphoglycerol + H2O = 1-hexadecanoyl-sn-glycero-3-phosphoglycerol + (9Z)-octadecenoate + H(+)</text>
        <dbReference type="Rhea" id="RHEA:44524"/>
        <dbReference type="ChEBI" id="CHEBI:15377"/>
        <dbReference type="ChEBI" id="CHEBI:15378"/>
        <dbReference type="ChEBI" id="CHEBI:30823"/>
        <dbReference type="ChEBI" id="CHEBI:84472"/>
        <dbReference type="ChEBI" id="CHEBI:84475"/>
    </reaction>
    <physiologicalReaction direction="left-to-right" evidence="2">
        <dbReference type="Rhea" id="RHEA:44525"/>
    </physiologicalReaction>
</comment>
<comment type="catalytic activity">
    <reaction evidence="4 5">
        <text>a 1,2-diacyl-sn-glycero-3-phosphocholine + H2O = a 1-acyl-sn-glycero-3-phosphocholine + a fatty acid + H(+)</text>
        <dbReference type="Rhea" id="RHEA:15801"/>
        <dbReference type="ChEBI" id="CHEBI:15377"/>
        <dbReference type="ChEBI" id="CHEBI:15378"/>
        <dbReference type="ChEBI" id="CHEBI:28868"/>
        <dbReference type="ChEBI" id="CHEBI:57643"/>
        <dbReference type="ChEBI" id="CHEBI:58168"/>
        <dbReference type="EC" id="3.1.1.4"/>
    </reaction>
    <physiologicalReaction direction="left-to-right" evidence="11">
        <dbReference type="Rhea" id="RHEA:15802"/>
    </physiologicalReaction>
</comment>
<comment type="catalytic activity">
    <reaction evidence="5">
        <text>1,2-dihexadecanoyl-sn-glycero-3-phosphocholine + H2O = 1-hexadecanoyl-sn-glycero-3-phosphocholine + hexadecanoate + H(+)</text>
        <dbReference type="Rhea" id="RHEA:41223"/>
        <dbReference type="ChEBI" id="CHEBI:7896"/>
        <dbReference type="ChEBI" id="CHEBI:15377"/>
        <dbReference type="ChEBI" id="CHEBI:15378"/>
        <dbReference type="ChEBI" id="CHEBI:72998"/>
        <dbReference type="ChEBI" id="CHEBI:72999"/>
    </reaction>
    <physiologicalReaction direction="left-to-right" evidence="11">
        <dbReference type="Rhea" id="RHEA:41224"/>
    </physiologicalReaction>
</comment>
<comment type="catalytic activity">
    <reaction evidence="2">
        <text>1-hexadecanoyl-2-(9Z-octadecenoyl)-sn-glycero-3-phosphocholine + H2O = 1-hexadecanoyl-sn-glycero-3-phosphocholine + (9Z)-octadecenoate + H(+)</text>
        <dbReference type="Rhea" id="RHEA:38779"/>
        <dbReference type="ChEBI" id="CHEBI:15377"/>
        <dbReference type="ChEBI" id="CHEBI:15378"/>
        <dbReference type="ChEBI" id="CHEBI:30823"/>
        <dbReference type="ChEBI" id="CHEBI:72998"/>
        <dbReference type="ChEBI" id="CHEBI:73001"/>
    </reaction>
    <physiologicalReaction direction="left-to-right" evidence="2">
        <dbReference type="Rhea" id="RHEA:38780"/>
    </physiologicalReaction>
</comment>
<comment type="catalytic activity">
    <reaction evidence="2">
        <text>1-hexadecanoyl-2-(9Z,12Z-octadecadienoyl)-sn-glycero-3-phosphocholine + H2O = (9Z,12Z)-octadecadienoate + 1-hexadecanoyl-sn-glycero-3-phosphocholine + H(+)</text>
        <dbReference type="Rhea" id="RHEA:40811"/>
        <dbReference type="ChEBI" id="CHEBI:15377"/>
        <dbReference type="ChEBI" id="CHEBI:15378"/>
        <dbReference type="ChEBI" id="CHEBI:30245"/>
        <dbReference type="ChEBI" id="CHEBI:72998"/>
        <dbReference type="ChEBI" id="CHEBI:73002"/>
    </reaction>
    <physiologicalReaction direction="left-to-right" evidence="2">
        <dbReference type="Rhea" id="RHEA:40812"/>
    </physiologicalReaction>
</comment>
<comment type="catalytic activity">
    <reaction evidence="2">
        <text>1-hexadecanoyl-2-(4Z,7Z,10Z,13Z,16Z,19Z-docosahexaenoyl)-sn-glycero-3-phosphocholine + H2O = (4Z,7Z,10Z,13Z,16Z,19Z)-docosahexaenoate + 1-hexadecanoyl-sn-glycero-3-phosphocholine + H(+)</text>
        <dbReference type="Rhea" id="RHEA:41231"/>
        <dbReference type="ChEBI" id="CHEBI:15377"/>
        <dbReference type="ChEBI" id="CHEBI:15378"/>
        <dbReference type="ChEBI" id="CHEBI:72998"/>
        <dbReference type="ChEBI" id="CHEBI:74963"/>
        <dbReference type="ChEBI" id="CHEBI:77016"/>
    </reaction>
    <physiologicalReaction direction="left-to-right" evidence="2">
        <dbReference type="Rhea" id="RHEA:41232"/>
    </physiologicalReaction>
</comment>
<comment type="cofactor">
    <cofactor evidence="2">
        <name>Ca(2+)</name>
        <dbReference type="ChEBI" id="CHEBI:29108"/>
    </cofactor>
    <text evidence="2">Binds 2 Ca(2+) ions per subunit.</text>
</comment>
<comment type="subcellular location">
    <subcellularLocation>
        <location evidence="7">Secreted</location>
    </subcellularLocation>
    <subcellularLocation>
        <location evidence="7">Cytoplasm</location>
    </subcellularLocation>
    <text evidence="2">Through binding to heparan sulfate proteoglycan, may be localized to cytoplasmic compartments enriched in anionic phospholipids.</text>
</comment>
<comment type="tissue specificity">
    <text evidence="5 6 7 8 9">Highly expressed in skin and uterus, and at lower levels in various other tissues (PubMed:10531313, PubMed:10681567, PubMed:11922621, PubMed:27226633). Expressed in hair follicles, specifically localized in companion cells of the outer root sheath and cuticular cells of the inner root sheath in hair follicles during anagen (PubMed:27226633). Expressed in white and brown adipose tissue (PubMed:24910243).</text>
</comment>
<comment type="developmental stage">
    <text evidence="9">Expressed abundantly in hair follicles during the anagen phase. Low expression is observed before birth, then follows hair cycle progression: up-regulated markedly during P5-P15 (anagen phase), declining to nearly the basal level during P20-P25 (catagen and telogen) and then increasing again at P30 (next anagen).</text>
</comment>
<comment type="induction">
    <text evidence="6 7 8">Up-regulated in thymus, small intestine, brain, heart, testis, kidney and lung upon endotoxin challenge (PubMed:10681567, PubMed:11922621). Detected in alveolar macrophage-like cells upon endotoxin challenge (PubMed:10681567). Up-regulated in white and brown adipocytes upon high-fat diet (PubMed:24910243). Up-regulated in ear epidermis in response to topical dermatitis agent 2,4-dinitrobenzene (DNFB) (PubMed:11922621).</text>
</comment>
<comment type="disruption phenotype">
    <text evidence="8 9">Mutant mice show abnormal hair follicle ultrastructure characterized by defects in the companion layer, the inner root sheath (IRS) and hair shaft. Mutant IRS cells have large cytoplasmic cysts and pyknotic nuclei and are devoid of keratohyalin granules, whereas the cuticle is abnormally dissociated from the hair cortex and medulla, indicative of impaired hair follicle development (PubMed:27226633). Mutant mice are protected from obesity and hyperlipidemia in response to high-fat diet (PubMed:24910243).</text>
</comment>
<comment type="similarity">
    <text evidence="10">Belongs to the phospholipase A2 family.</text>
</comment>
<reference key="1">
    <citation type="journal article" date="1999" name="J. Biol. Chem.">
        <title>On the diversity of secreted phospholipases A2. Cloning, tissue distribution, and functional expression of two novel mouse group II enzymes.</title>
        <authorList>
            <person name="Valentin E."/>
            <person name="Ghomashchi F."/>
            <person name="Gelb M.H."/>
            <person name="Lazdunski M."/>
            <person name="Lambeau G."/>
        </authorList>
    </citation>
    <scope>NUCLEOTIDE SEQUENCE [MRNA]</scope>
    <scope>TISSUE SPECIFICITY</scope>
    <scope>FUNCTION</scope>
    <scope>CATALYTIC ACTIVITY</scope>
</reference>
<reference key="2">
    <citation type="journal article" date="2000" name="J. Biol. Chem.">
        <title>Structures, enzymatic properties, and expression of novel human and mouse secretory phospholipase A(2)s.</title>
        <authorList>
            <person name="Suzuki N."/>
            <person name="Ishizaki J."/>
            <person name="Yokota Y."/>
            <person name="Higashino K."/>
            <person name="Ono T."/>
            <person name="Ikeda M."/>
            <person name="Fujii N."/>
            <person name="Kawamoto K."/>
            <person name="Hanasaki K."/>
        </authorList>
    </citation>
    <scope>NUCLEOTIDE SEQUENCE [MRNA]</scope>
    <scope>TISSUE SPECIFICITY</scope>
    <scope>INDUCTION BY LIPOPOLYSACCHARIDE</scope>
    <source>
        <strain>BALB/cJ</strain>
    </source>
</reference>
<reference key="3">
    <citation type="journal article" date="2002" name="Biochem. Biophys. Res. Commun.">
        <title>Arachidonate release and eicosanoid generation by group IIE phospholipase A(2).</title>
        <authorList>
            <person name="Murakami M."/>
            <person name="Yoshihara K."/>
            <person name="Shimbara S."/>
            <person name="Lambeau G."/>
            <person name="Singer A."/>
            <person name="Gelb M.H."/>
            <person name="Sawada M."/>
            <person name="Inagaki N."/>
            <person name="Nagai H."/>
            <person name="Kudo I."/>
        </authorList>
    </citation>
    <scope>FUNCTION</scope>
    <scope>CATALYTIC ACTIVITY</scope>
    <scope>TISSUE SPECIFICITY</scope>
    <scope>INDUCTION BY LIPOPOLYSACCHARIDE</scope>
    <scope>SUBCELLULAR LOCATION</scope>
</reference>
<reference key="4">
    <citation type="journal article" date="2004" name="Genome Res.">
        <title>The status, quality, and expansion of the NIH full-length cDNA project: the Mammalian Gene Collection (MGC).</title>
        <authorList>
            <consortium name="The MGC Project Team"/>
        </authorList>
    </citation>
    <scope>NUCLEOTIDE SEQUENCE [LARGE SCALE MRNA]</scope>
    <source>
        <tissue>Uterus</tissue>
    </source>
</reference>
<reference key="5">
    <citation type="journal article" date="2014" name="Cell Metab.">
        <title>The adipocyte-inducible secreted phospholipases PLA2G5 and PLA2G2E play distinct roles in obesity.</title>
        <authorList>
            <person name="Sato H."/>
            <person name="Taketomi Y."/>
            <person name="Ushida A."/>
            <person name="Isogai Y."/>
            <person name="Kojima T."/>
            <person name="Hirabayashi T."/>
            <person name="Miki Y."/>
            <person name="Yamamoto K."/>
            <person name="Nishito Y."/>
            <person name="Kobayashi T."/>
            <person name="Ikeda K."/>
            <person name="Taguchi R."/>
            <person name="Hara S."/>
            <person name="Ida S."/>
            <person name="Miyamoto Y."/>
            <person name="Watanabe M."/>
            <person name="Baba H."/>
            <person name="Miyata K."/>
            <person name="Oike Y."/>
            <person name="Gelb M.H."/>
            <person name="Murakami M."/>
        </authorList>
    </citation>
    <scope>FUNCTION</scope>
    <scope>DISRUPTION PHENOTYPE</scope>
    <scope>TISSUE SPECIFICITY</scope>
    <scope>INDUCTION BY HIGH-FAT DIET</scope>
</reference>
<reference key="6">
    <citation type="journal article" date="2016" name="J. Biol. Chem.">
        <title>Expression and Function of Group IIE Phospholipase A2 in Mouse Skin.</title>
        <authorList>
            <person name="Yamamoto K."/>
            <person name="Miki Y."/>
            <person name="Sato H."/>
            <person name="Nishito Y."/>
            <person name="Gelb M.H."/>
            <person name="Taketomi Y."/>
            <person name="Murakami M."/>
        </authorList>
    </citation>
    <scope>FUNCTION</scope>
    <scope>DISRUPTION PHENOTYPE</scope>
    <scope>TISSUE SPECIFICITY</scope>
    <scope>DEVELOPMENTAL STAGE</scope>
</reference>